<keyword id="KW-0687">Ribonucleoprotein</keyword>
<keyword id="KW-0689">Ribosomal protein</keyword>
<keyword id="KW-0694">RNA-binding</keyword>
<keyword id="KW-0699">rRNA-binding</keyword>
<protein>
    <recommendedName>
        <fullName evidence="1">Small ribosomal subunit protein uS5</fullName>
    </recommendedName>
    <alternativeName>
        <fullName evidence="2">30S ribosomal protein S5</fullName>
    </alternativeName>
</protein>
<reference key="1">
    <citation type="submission" date="2008-12" db="EMBL/GenBank/DDBJ databases">
        <title>Complete sequence of chromosome of Shewanella baltica OS223.</title>
        <authorList>
            <consortium name="US DOE Joint Genome Institute"/>
            <person name="Lucas S."/>
            <person name="Copeland A."/>
            <person name="Lapidus A."/>
            <person name="Glavina del Rio T."/>
            <person name="Dalin E."/>
            <person name="Tice H."/>
            <person name="Bruce D."/>
            <person name="Goodwin L."/>
            <person name="Pitluck S."/>
            <person name="Chertkov O."/>
            <person name="Meincke L."/>
            <person name="Brettin T."/>
            <person name="Detter J.C."/>
            <person name="Han C."/>
            <person name="Kuske C.R."/>
            <person name="Larimer F."/>
            <person name="Land M."/>
            <person name="Hauser L."/>
            <person name="Kyrpides N."/>
            <person name="Ovchinnikova G."/>
            <person name="Brettar I."/>
            <person name="Rodrigues J."/>
            <person name="Konstantinidis K."/>
            <person name="Tiedje J."/>
        </authorList>
    </citation>
    <scope>NUCLEOTIDE SEQUENCE [LARGE SCALE GENOMIC DNA]</scope>
    <source>
        <strain>OS223</strain>
    </source>
</reference>
<evidence type="ECO:0000255" key="1">
    <source>
        <dbReference type="HAMAP-Rule" id="MF_01307"/>
    </source>
</evidence>
<evidence type="ECO:0000305" key="2"/>
<proteinExistence type="inferred from homology"/>
<name>RS5_SHEB2</name>
<feature type="chain" id="PRO_1000165464" description="Small ribosomal subunit protein uS5">
    <location>
        <begin position="1"/>
        <end position="167"/>
    </location>
</feature>
<feature type="domain" description="S5 DRBM" evidence="1">
    <location>
        <begin position="12"/>
        <end position="75"/>
    </location>
</feature>
<accession>B8EBI8</accession>
<gene>
    <name evidence="1" type="primary">rpsE</name>
    <name type="ordered locus">Sbal223_4039</name>
</gene>
<sequence>MAKLEAQQKDDLQEKLIAVNRVSKVVKGGRIFSFTALTVVGDGNGKIGYGYGKAREVPAAIQKAMEKARRNIVTVELNAGTLHHPVKGRHTGSLVYMQPASQGTGIIAGGAMRAVLEVAGVHNVLSKAYGSTNPINIVRATVDALVHMKSPSQIAAKRGLNVDEIRG</sequence>
<organism>
    <name type="scientific">Shewanella baltica (strain OS223)</name>
    <dbReference type="NCBI Taxonomy" id="407976"/>
    <lineage>
        <taxon>Bacteria</taxon>
        <taxon>Pseudomonadati</taxon>
        <taxon>Pseudomonadota</taxon>
        <taxon>Gammaproteobacteria</taxon>
        <taxon>Alteromonadales</taxon>
        <taxon>Shewanellaceae</taxon>
        <taxon>Shewanella</taxon>
    </lineage>
</organism>
<comment type="function">
    <text evidence="1">With S4 and S12 plays an important role in translational accuracy.</text>
</comment>
<comment type="function">
    <text evidence="1">Located at the back of the 30S subunit body where it stabilizes the conformation of the head with respect to the body.</text>
</comment>
<comment type="subunit">
    <text evidence="1">Part of the 30S ribosomal subunit. Contacts proteins S4 and S8.</text>
</comment>
<comment type="domain">
    <text>The N-terminal domain interacts with the head of the 30S subunit; the C-terminal domain interacts with the body and contacts protein S4. The interaction surface between S4 and S5 is involved in control of translational fidelity.</text>
</comment>
<comment type="similarity">
    <text evidence="1">Belongs to the universal ribosomal protein uS5 family.</text>
</comment>
<dbReference type="EMBL" id="CP001252">
    <property type="protein sequence ID" value="ACK48512.1"/>
    <property type="molecule type" value="Genomic_DNA"/>
</dbReference>
<dbReference type="RefSeq" id="WP_006083583.1">
    <property type="nucleotide sequence ID" value="NC_011663.1"/>
</dbReference>
<dbReference type="SMR" id="B8EBI8"/>
<dbReference type="GeneID" id="11770573"/>
<dbReference type="KEGG" id="sbp:Sbal223_4039"/>
<dbReference type="HOGENOM" id="CLU_065898_2_2_6"/>
<dbReference type="Proteomes" id="UP000002507">
    <property type="component" value="Chromosome"/>
</dbReference>
<dbReference type="GO" id="GO:0015935">
    <property type="term" value="C:small ribosomal subunit"/>
    <property type="evidence" value="ECO:0007669"/>
    <property type="project" value="InterPro"/>
</dbReference>
<dbReference type="GO" id="GO:0019843">
    <property type="term" value="F:rRNA binding"/>
    <property type="evidence" value="ECO:0007669"/>
    <property type="project" value="UniProtKB-UniRule"/>
</dbReference>
<dbReference type="GO" id="GO:0003735">
    <property type="term" value="F:structural constituent of ribosome"/>
    <property type="evidence" value="ECO:0007669"/>
    <property type="project" value="InterPro"/>
</dbReference>
<dbReference type="GO" id="GO:0006412">
    <property type="term" value="P:translation"/>
    <property type="evidence" value="ECO:0007669"/>
    <property type="project" value="UniProtKB-UniRule"/>
</dbReference>
<dbReference type="FunFam" id="3.30.160.20:FF:000001">
    <property type="entry name" value="30S ribosomal protein S5"/>
    <property type="match status" value="1"/>
</dbReference>
<dbReference type="FunFam" id="3.30.230.10:FF:000002">
    <property type="entry name" value="30S ribosomal protein S5"/>
    <property type="match status" value="1"/>
</dbReference>
<dbReference type="Gene3D" id="3.30.160.20">
    <property type="match status" value="1"/>
</dbReference>
<dbReference type="Gene3D" id="3.30.230.10">
    <property type="match status" value="1"/>
</dbReference>
<dbReference type="HAMAP" id="MF_01307_B">
    <property type="entry name" value="Ribosomal_uS5_B"/>
    <property type="match status" value="1"/>
</dbReference>
<dbReference type="InterPro" id="IPR020568">
    <property type="entry name" value="Ribosomal_Su5_D2-typ_SF"/>
</dbReference>
<dbReference type="InterPro" id="IPR000851">
    <property type="entry name" value="Ribosomal_uS5"/>
</dbReference>
<dbReference type="InterPro" id="IPR005712">
    <property type="entry name" value="Ribosomal_uS5_bac-type"/>
</dbReference>
<dbReference type="InterPro" id="IPR005324">
    <property type="entry name" value="Ribosomal_uS5_C"/>
</dbReference>
<dbReference type="InterPro" id="IPR013810">
    <property type="entry name" value="Ribosomal_uS5_N"/>
</dbReference>
<dbReference type="InterPro" id="IPR018192">
    <property type="entry name" value="Ribosomal_uS5_N_CS"/>
</dbReference>
<dbReference type="InterPro" id="IPR014721">
    <property type="entry name" value="Ribsml_uS5_D2-typ_fold_subgr"/>
</dbReference>
<dbReference type="NCBIfam" id="TIGR01021">
    <property type="entry name" value="rpsE_bact"/>
    <property type="match status" value="1"/>
</dbReference>
<dbReference type="PANTHER" id="PTHR48277">
    <property type="entry name" value="MITOCHONDRIAL RIBOSOMAL PROTEIN S5"/>
    <property type="match status" value="1"/>
</dbReference>
<dbReference type="PANTHER" id="PTHR48277:SF1">
    <property type="entry name" value="MITOCHONDRIAL RIBOSOMAL PROTEIN S5"/>
    <property type="match status" value="1"/>
</dbReference>
<dbReference type="Pfam" id="PF00333">
    <property type="entry name" value="Ribosomal_S5"/>
    <property type="match status" value="1"/>
</dbReference>
<dbReference type="Pfam" id="PF03719">
    <property type="entry name" value="Ribosomal_S5_C"/>
    <property type="match status" value="1"/>
</dbReference>
<dbReference type="SUPFAM" id="SSF54768">
    <property type="entry name" value="dsRNA-binding domain-like"/>
    <property type="match status" value="1"/>
</dbReference>
<dbReference type="SUPFAM" id="SSF54211">
    <property type="entry name" value="Ribosomal protein S5 domain 2-like"/>
    <property type="match status" value="1"/>
</dbReference>
<dbReference type="PROSITE" id="PS00585">
    <property type="entry name" value="RIBOSOMAL_S5"/>
    <property type="match status" value="1"/>
</dbReference>
<dbReference type="PROSITE" id="PS50881">
    <property type="entry name" value="S5_DSRBD"/>
    <property type="match status" value="1"/>
</dbReference>